<feature type="chain" id="PRO_0000099929" description="Indolepyruvate oxidoreductase subunit IorA">
    <location>
        <begin position="1"/>
        <end position="648"/>
    </location>
</feature>
<feature type="domain" description="4Fe-4S ferredoxin-type 1" evidence="3">
    <location>
        <begin position="585"/>
        <end position="614"/>
    </location>
</feature>
<feature type="domain" description="4Fe-4S ferredoxin-type 2" evidence="3">
    <location>
        <begin position="616"/>
        <end position="645"/>
    </location>
</feature>
<feature type="binding site" evidence="2">
    <location>
        <position position="594"/>
    </location>
    <ligand>
        <name>[4Fe-4S] cluster</name>
        <dbReference type="ChEBI" id="CHEBI:49883"/>
        <label>1</label>
    </ligand>
</feature>
<feature type="binding site" evidence="2">
    <location>
        <position position="597"/>
    </location>
    <ligand>
        <name>[4Fe-4S] cluster</name>
        <dbReference type="ChEBI" id="CHEBI:49883"/>
        <label>1</label>
    </ligand>
</feature>
<feature type="binding site" evidence="2">
    <location>
        <position position="600"/>
    </location>
    <ligand>
        <name>[4Fe-4S] cluster</name>
        <dbReference type="ChEBI" id="CHEBI:49883"/>
        <label>1</label>
    </ligand>
</feature>
<feature type="binding site" evidence="2">
    <location>
        <position position="606"/>
    </location>
    <ligand>
        <name>[4Fe-4S] cluster</name>
        <dbReference type="ChEBI" id="CHEBI:49883"/>
        <label>2</label>
    </ligand>
</feature>
<feature type="binding site" evidence="2">
    <location>
        <position position="625"/>
    </location>
    <ligand>
        <name>[4Fe-4S] cluster</name>
        <dbReference type="ChEBI" id="CHEBI:49883"/>
        <label>2</label>
    </ligand>
</feature>
<feature type="binding site" evidence="2">
    <location>
        <position position="628"/>
    </location>
    <ligand>
        <name>[4Fe-4S] cluster</name>
        <dbReference type="ChEBI" id="CHEBI:49883"/>
        <label>2</label>
    </ligand>
</feature>
<feature type="binding site" evidence="2">
    <location>
        <position position="631"/>
    </location>
    <ligand>
        <name>[4Fe-4S] cluster</name>
        <dbReference type="ChEBI" id="CHEBI:49883"/>
        <label>2</label>
    </ligand>
</feature>
<feature type="binding site" evidence="2">
    <location>
        <position position="635"/>
    </location>
    <ligand>
        <name>[4Fe-4S] cluster</name>
        <dbReference type="ChEBI" id="CHEBI:49883"/>
        <label>1</label>
    </ligand>
</feature>
<protein>
    <recommendedName>
        <fullName>Indolepyruvate oxidoreductase subunit IorA</fullName>
        <shortName>IOR</shortName>
        <ecNumber>1.2.7.8</ecNumber>
    </recommendedName>
    <alternativeName>
        <fullName>Indolepyruvate ferredoxin oxidoreductase subunit alpha</fullName>
    </alternativeName>
</protein>
<accession>O58495</accession>
<gene>
    <name type="primary">iorA</name>
    <name type="ordered locus">PH0765</name>
</gene>
<name>IORA_PYRHO</name>
<proteinExistence type="inferred from homology"/>
<sequence length="648" mass="71532">MVKVTDIVLWDKPGEKVLLLGNQAIVRGALEGNIGVYAAYPGTPSSEITDTMAMVAKKAGVYMEYSTNEKVAFETALSASWAGLRAMTAMKHVGLNVAMDSFMTVSYMGINGGLIVVVADDPSMWSSQNEQDTRAIAKFANIPVLEPSSVQEAKDMVKYAFEISEKYGQMVILRTTTRSSHMRGDVVLGELPQEIKEGKRKFGNFKKNPEKYVDIPAFQRPKHPWLLETIEKFREEFNTSPFNWIEGPEDAKVGIIAPGLSYAYVKEALAWLGIDNVKILKLGTPFPVPYGLLEKFFNGLERVLIVEELEPVVEEQVKVWAFDNNINIEIHGKDLVPRVYEMTTRRAVEAVAKFLGVETPINFQEIDEKYKKVQEMVPPRPPSLCPACPHRNTFFAIRKAATPRAIFPSDIGCYTLGVLPPLKTVDTTIAMGGSIGVAHGLSIALNGALGEEQRKTGKEKKIIVATIGDSTFFHTGLPALANAIYNRSNVLIVVMDNMVTAMTGDQPNPGTGETPHGPGKRILIEEVARAMGADFVAVVDPYDIKETYETIKKALEVEGVSVVVSRRACALYRIGQLRREGKQWPIYQVNEEKCTGCKICINAYGCPAIYWDAEKKKARVDPLMCWGCGGCAQVCPFGAFEKVREGEL</sequence>
<dbReference type="EC" id="1.2.7.8"/>
<dbReference type="EMBL" id="BA000001">
    <property type="protein sequence ID" value="BAA29856.1"/>
    <property type="molecule type" value="Genomic_DNA"/>
</dbReference>
<dbReference type="PIR" id="F71124">
    <property type="entry name" value="F71124"/>
</dbReference>
<dbReference type="RefSeq" id="WP_010884856.1">
    <property type="nucleotide sequence ID" value="NC_000961.1"/>
</dbReference>
<dbReference type="STRING" id="70601.gene:9377713"/>
<dbReference type="DNASU" id="1443091"/>
<dbReference type="EnsemblBacteria" id="BAA29856">
    <property type="protein sequence ID" value="BAA29856"/>
    <property type="gene ID" value="BAA29856"/>
</dbReference>
<dbReference type="GeneID" id="1443091"/>
<dbReference type="KEGG" id="pho:PH0765"/>
<dbReference type="eggNOG" id="arCOG01609">
    <property type="taxonomic scope" value="Archaea"/>
</dbReference>
<dbReference type="OrthoDB" id="15347at2157"/>
<dbReference type="Proteomes" id="UP000000752">
    <property type="component" value="Chromosome"/>
</dbReference>
<dbReference type="GO" id="GO:0051539">
    <property type="term" value="F:4 iron, 4 sulfur cluster binding"/>
    <property type="evidence" value="ECO:0007669"/>
    <property type="project" value="UniProtKB-KW"/>
</dbReference>
<dbReference type="GO" id="GO:0043805">
    <property type="term" value="F:indolepyruvate ferredoxin oxidoreductase activity"/>
    <property type="evidence" value="ECO:0007669"/>
    <property type="project" value="UniProtKB-EC"/>
</dbReference>
<dbReference type="GO" id="GO:0046872">
    <property type="term" value="F:metal ion binding"/>
    <property type="evidence" value="ECO:0007669"/>
    <property type="project" value="UniProtKB-KW"/>
</dbReference>
<dbReference type="GO" id="GO:0030976">
    <property type="term" value="F:thiamine pyrophosphate binding"/>
    <property type="evidence" value="ECO:0007669"/>
    <property type="project" value="InterPro"/>
</dbReference>
<dbReference type="GO" id="GO:0006082">
    <property type="term" value="P:organic acid metabolic process"/>
    <property type="evidence" value="ECO:0007669"/>
    <property type="project" value="UniProtKB-ARBA"/>
</dbReference>
<dbReference type="GO" id="GO:0044272">
    <property type="term" value="P:sulfur compound biosynthetic process"/>
    <property type="evidence" value="ECO:0007669"/>
    <property type="project" value="UniProtKB-ARBA"/>
</dbReference>
<dbReference type="CDD" id="cd02008">
    <property type="entry name" value="TPP_IOR_alpha"/>
    <property type="match status" value="1"/>
</dbReference>
<dbReference type="CDD" id="cd07034">
    <property type="entry name" value="TPP_PYR_PFOR_IOR-alpha_like"/>
    <property type="match status" value="1"/>
</dbReference>
<dbReference type="FunFam" id="3.40.50.970:FF:000039">
    <property type="entry name" value="Indolepyruvate oxidoreductase subunit IorA"/>
    <property type="match status" value="1"/>
</dbReference>
<dbReference type="Gene3D" id="3.30.70.20">
    <property type="match status" value="1"/>
</dbReference>
<dbReference type="Gene3D" id="3.40.50.970">
    <property type="match status" value="2"/>
</dbReference>
<dbReference type="InterPro" id="IPR017896">
    <property type="entry name" value="4Fe4S_Fe-S-bd"/>
</dbReference>
<dbReference type="InterPro" id="IPR017900">
    <property type="entry name" value="4Fe4S_Fe_S_CS"/>
</dbReference>
<dbReference type="InterPro" id="IPR045025">
    <property type="entry name" value="HACL1-like"/>
</dbReference>
<dbReference type="InterPro" id="IPR017721">
    <property type="entry name" value="IorA"/>
</dbReference>
<dbReference type="InterPro" id="IPR002880">
    <property type="entry name" value="Pyrv_Fd/Flavodoxin_OxRdtase_N"/>
</dbReference>
<dbReference type="InterPro" id="IPR029061">
    <property type="entry name" value="THDP-binding"/>
</dbReference>
<dbReference type="InterPro" id="IPR011766">
    <property type="entry name" value="TPP_enzyme_TPP-bd"/>
</dbReference>
<dbReference type="InterPro" id="IPR009014">
    <property type="entry name" value="Transketo_C/PFOR_II"/>
</dbReference>
<dbReference type="NCBIfam" id="TIGR03336">
    <property type="entry name" value="IOR_alpha"/>
    <property type="match status" value="1"/>
</dbReference>
<dbReference type="PANTHER" id="PTHR43710">
    <property type="entry name" value="2-HYDROXYACYL-COA LYASE"/>
    <property type="match status" value="1"/>
</dbReference>
<dbReference type="PANTHER" id="PTHR43710:SF7">
    <property type="entry name" value="INDOLEPYRUVATE OXIDOREDUCTASE SUBUNIT IORA"/>
    <property type="match status" value="1"/>
</dbReference>
<dbReference type="Pfam" id="PF12838">
    <property type="entry name" value="Fer4_7"/>
    <property type="match status" value="1"/>
</dbReference>
<dbReference type="Pfam" id="PF01855">
    <property type="entry name" value="POR_N"/>
    <property type="match status" value="1"/>
</dbReference>
<dbReference type="Pfam" id="PF02775">
    <property type="entry name" value="TPP_enzyme_C"/>
    <property type="match status" value="1"/>
</dbReference>
<dbReference type="PIRSF" id="PIRSF006439">
    <property type="entry name" value="Indolepyruvate_ferr_oxidored"/>
    <property type="match status" value="1"/>
</dbReference>
<dbReference type="SUPFAM" id="SSF54862">
    <property type="entry name" value="4Fe-4S ferredoxins"/>
    <property type="match status" value="1"/>
</dbReference>
<dbReference type="SUPFAM" id="SSF52518">
    <property type="entry name" value="Thiamin diphosphate-binding fold (THDP-binding)"/>
    <property type="match status" value="2"/>
</dbReference>
<dbReference type="SUPFAM" id="SSF52922">
    <property type="entry name" value="TK C-terminal domain-like"/>
    <property type="match status" value="1"/>
</dbReference>
<dbReference type="PROSITE" id="PS00198">
    <property type="entry name" value="4FE4S_FER_1"/>
    <property type="match status" value="1"/>
</dbReference>
<dbReference type="PROSITE" id="PS51379">
    <property type="entry name" value="4FE4S_FER_2"/>
    <property type="match status" value="2"/>
</dbReference>
<reference key="1">
    <citation type="journal article" date="1998" name="DNA Res.">
        <title>Complete sequence and gene organization of the genome of a hyper-thermophilic archaebacterium, Pyrococcus horikoshii OT3.</title>
        <authorList>
            <person name="Kawarabayasi Y."/>
            <person name="Sawada M."/>
            <person name="Horikawa H."/>
            <person name="Haikawa Y."/>
            <person name="Hino Y."/>
            <person name="Yamamoto S."/>
            <person name="Sekine M."/>
            <person name="Baba S."/>
            <person name="Kosugi H."/>
            <person name="Hosoyama A."/>
            <person name="Nagai Y."/>
            <person name="Sakai M."/>
            <person name="Ogura K."/>
            <person name="Otsuka R."/>
            <person name="Nakazawa H."/>
            <person name="Takamiya M."/>
            <person name="Ohfuku Y."/>
            <person name="Funahashi T."/>
            <person name="Tanaka T."/>
            <person name="Kudoh Y."/>
            <person name="Yamazaki J."/>
            <person name="Kushida N."/>
            <person name="Oguchi A."/>
            <person name="Aoki K."/>
            <person name="Yoshizawa T."/>
            <person name="Nakamura Y."/>
            <person name="Robb F.T."/>
            <person name="Horikoshi K."/>
            <person name="Masuchi Y."/>
            <person name="Shizuya H."/>
            <person name="Kikuchi H."/>
        </authorList>
    </citation>
    <scope>NUCLEOTIDE SEQUENCE [LARGE SCALE GENOMIC DNA]</scope>
    <source>
        <strain>ATCC 700860 / DSM 12428 / JCM 9974 / NBRC 100139 / OT-3</strain>
    </source>
</reference>
<organism>
    <name type="scientific">Pyrococcus horikoshii (strain ATCC 700860 / DSM 12428 / JCM 9974 / NBRC 100139 / OT-3)</name>
    <dbReference type="NCBI Taxonomy" id="70601"/>
    <lineage>
        <taxon>Archaea</taxon>
        <taxon>Methanobacteriati</taxon>
        <taxon>Methanobacteriota</taxon>
        <taxon>Thermococci</taxon>
        <taxon>Thermococcales</taxon>
        <taxon>Thermococcaceae</taxon>
        <taxon>Pyrococcus</taxon>
    </lineage>
</organism>
<evidence type="ECO:0000250" key="1"/>
<evidence type="ECO:0000250" key="2">
    <source>
        <dbReference type="UniProtKB" id="O07835"/>
    </source>
</evidence>
<evidence type="ECO:0000255" key="3">
    <source>
        <dbReference type="PROSITE-ProRule" id="PRU00711"/>
    </source>
</evidence>
<comment type="function">
    <text evidence="1">Catalyzes the ferredoxin-dependent oxidative decarboxylation of arylpyruvates.</text>
</comment>
<comment type="catalytic activity">
    <reaction>
        <text>indole-3-pyruvate + 2 oxidized [2Fe-2S]-[ferredoxin] + CoA = (indol-3-yl)acetyl-CoA + 2 reduced [2Fe-2S]-[ferredoxin] + CO2 + H(+)</text>
        <dbReference type="Rhea" id="RHEA:12645"/>
        <dbReference type="Rhea" id="RHEA-COMP:10000"/>
        <dbReference type="Rhea" id="RHEA-COMP:10001"/>
        <dbReference type="ChEBI" id="CHEBI:15378"/>
        <dbReference type="ChEBI" id="CHEBI:16526"/>
        <dbReference type="ChEBI" id="CHEBI:17640"/>
        <dbReference type="ChEBI" id="CHEBI:33737"/>
        <dbReference type="ChEBI" id="CHEBI:33738"/>
        <dbReference type="ChEBI" id="CHEBI:57271"/>
        <dbReference type="ChEBI" id="CHEBI:57287"/>
        <dbReference type="EC" id="1.2.7.8"/>
    </reaction>
</comment>
<comment type="cofactor">
    <cofactor evidence="2">
        <name>[4Fe-4S] cluster</name>
        <dbReference type="ChEBI" id="CHEBI:49883"/>
    </cofactor>
    <text evidence="2">Binds 2 [4Fe-4S] clusters. In this family the first cluster has a non-standard and varying [4Fe-4S] binding motif CX(2)CX(2)CX(4-5)CP.</text>
</comment>
<comment type="subunit">
    <text>Heterodimer of the IorA and IorB subunits.</text>
</comment>
<keyword id="KW-0004">4Fe-4S</keyword>
<keyword id="KW-0249">Electron transport</keyword>
<keyword id="KW-0408">Iron</keyword>
<keyword id="KW-0411">Iron-sulfur</keyword>
<keyword id="KW-0479">Metal-binding</keyword>
<keyword id="KW-0560">Oxidoreductase</keyword>
<keyword id="KW-0677">Repeat</keyword>
<keyword id="KW-0813">Transport</keyword>